<reference key="1">
    <citation type="journal article" date="2008" name="Genome Res.">
        <title>The genome of Pelotomaculum thermopropionicum reveals niche-associated evolution in anaerobic microbiota.</title>
        <authorList>
            <person name="Kosaka T."/>
            <person name="Kato S."/>
            <person name="Shimoyama T."/>
            <person name="Ishii S."/>
            <person name="Abe T."/>
            <person name="Watanabe K."/>
        </authorList>
    </citation>
    <scope>NUCLEOTIDE SEQUENCE [LARGE SCALE GENOMIC DNA]</scope>
    <source>
        <strain>DSM 13744 / JCM 10971 / SI</strain>
    </source>
</reference>
<comment type="function">
    <text evidence="1">Catalyzes the specific phosphorylation of arginine residues in proteins.</text>
</comment>
<comment type="catalytic activity">
    <reaction evidence="1">
        <text>L-arginyl-[protein] + ATP = N(omega)-phospho-L-arginyl-[protein] + ADP + H(+)</text>
        <dbReference type="Rhea" id="RHEA:43384"/>
        <dbReference type="Rhea" id="RHEA-COMP:10532"/>
        <dbReference type="Rhea" id="RHEA-COMP:10533"/>
        <dbReference type="ChEBI" id="CHEBI:15378"/>
        <dbReference type="ChEBI" id="CHEBI:29965"/>
        <dbReference type="ChEBI" id="CHEBI:30616"/>
        <dbReference type="ChEBI" id="CHEBI:83226"/>
        <dbReference type="ChEBI" id="CHEBI:456216"/>
        <dbReference type="EC" id="2.7.14.1"/>
    </reaction>
</comment>
<comment type="activity regulation">
    <text evidence="1">Appears to be allosterically activated by the binding of pArg-containing polypeptides to the pArg-binding pocket localized in the C-terminal domain of McsB.</text>
</comment>
<comment type="similarity">
    <text evidence="1">Belongs to the ATP:guanido phosphotransferase family.</text>
</comment>
<sequence length="356" mass="39933">MTLRETVNNAHSHWMDADGPESEIIISSRVRVARNLAGIPFPHLLNKENSEKVIHAVRLAISNKEASELLGGLELSSLGELSPLERQILVDKHLISPDLLNDFQRKAVVLREDEVVSIMVNEEDHLRIQCILPGLQLKEAWDVVNRVDDGLEKTLDYAFSEKVGYLTSCPTNVGTGMRASVMIHLPGLKLAKQLAGVLNAINKLGLTVRGLYGEGTEALGDLFQISNQITLGQSEEEIINNLISIARQILAQEQAARRNLYKDRREVIEDRVFRAFGALKYARILSSEEAMRLFSDLRLGVEMKIISGIPVRLLNELMVKIRPAFITKMAGRELTPYQRDIFRAGLIRREFANLPV</sequence>
<evidence type="ECO:0000255" key="1">
    <source>
        <dbReference type="HAMAP-Rule" id="MF_00602"/>
    </source>
</evidence>
<organism>
    <name type="scientific">Pelotomaculum thermopropionicum (strain DSM 13744 / JCM 10971 / SI)</name>
    <dbReference type="NCBI Taxonomy" id="370438"/>
    <lineage>
        <taxon>Bacteria</taxon>
        <taxon>Bacillati</taxon>
        <taxon>Bacillota</taxon>
        <taxon>Clostridia</taxon>
        <taxon>Eubacteriales</taxon>
        <taxon>Desulfotomaculaceae</taxon>
        <taxon>Pelotomaculum</taxon>
    </lineage>
</organism>
<keyword id="KW-0021">Allosteric enzyme</keyword>
<keyword id="KW-0067">ATP-binding</keyword>
<keyword id="KW-0418">Kinase</keyword>
<keyword id="KW-0547">Nucleotide-binding</keyword>
<keyword id="KW-1185">Reference proteome</keyword>
<keyword id="KW-0808">Transferase</keyword>
<feature type="chain" id="PRO_1000130113" description="Protein-arginine kinase">
    <location>
        <begin position="1"/>
        <end position="356"/>
    </location>
</feature>
<feature type="domain" description="Phosphagen kinase C-terminal" evidence="1">
    <location>
        <begin position="24"/>
        <end position="256"/>
    </location>
</feature>
<feature type="short sequence motif" description="RDXXRA motif of the pArg binding pocket involved in allosteric regulation" evidence="1">
    <location>
        <begin position="339"/>
        <end position="344"/>
    </location>
</feature>
<feature type="binding site" evidence="1">
    <location>
        <begin position="27"/>
        <end position="31"/>
    </location>
    <ligand>
        <name>ATP</name>
        <dbReference type="ChEBI" id="CHEBI:30616"/>
    </ligand>
</feature>
<feature type="binding site" evidence="1">
    <location>
        <position position="93"/>
    </location>
    <ligand>
        <name>ATP</name>
        <dbReference type="ChEBI" id="CHEBI:30616"/>
    </ligand>
</feature>
<feature type="binding site" evidence="1">
    <location>
        <position position="127"/>
    </location>
    <ligand>
        <name>ATP</name>
        <dbReference type="ChEBI" id="CHEBI:30616"/>
    </ligand>
</feature>
<feature type="binding site" evidence="1">
    <location>
        <begin position="178"/>
        <end position="182"/>
    </location>
    <ligand>
        <name>ATP</name>
        <dbReference type="ChEBI" id="CHEBI:30616"/>
    </ligand>
</feature>
<feature type="binding site" evidence="1">
    <location>
        <begin position="209"/>
        <end position="214"/>
    </location>
    <ligand>
        <name>ATP</name>
        <dbReference type="ChEBI" id="CHEBI:30616"/>
    </ligand>
</feature>
<name>MCSB_PELTS</name>
<proteinExistence type="inferred from homology"/>
<gene>
    <name evidence="1" type="primary">mcsB</name>
    <name type="ordered locus">PTH_0282</name>
</gene>
<accession>A5D5K7</accession>
<protein>
    <recommendedName>
        <fullName evidence="1">Protein-arginine kinase</fullName>
        <ecNumber evidence="1">2.7.14.1</ecNumber>
    </recommendedName>
</protein>
<dbReference type="EC" id="2.7.14.1" evidence="1"/>
<dbReference type="EMBL" id="AP009389">
    <property type="protein sequence ID" value="BAF58463.1"/>
    <property type="molecule type" value="Genomic_DNA"/>
</dbReference>
<dbReference type="SMR" id="A5D5K7"/>
<dbReference type="STRING" id="370438.PTH_0282"/>
<dbReference type="KEGG" id="pth:PTH_0282"/>
<dbReference type="eggNOG" id="COG3869">
    <property type="taxonomic scope" value="Bacteria"/>
</dbReference>
<dbReference type="HOGENOM" id="CLU_066591_1_0_9"/>
<dbReference type="Proteomes" id="UP000006556">
    <property type="component" value="Chromosome"/>
</dbReference>
<dbReference type="GO" id="GO:0005615">
    <property type="term" value="C:extracellular space"/>
    <property type="evidence" value="ECO:0007669"/>
    <property type="project" value="TreeGrafter"/>
</dbReference>
<dbReference type="GO" id="GO:0005524">
    <property type="term" value="F:ATP binding"/>
    <property type="evidence" value="ECO:0007669"/>
    <property type="project" value="UniProtKB-KW"/>
</dbReference>
<dbReference type="GO" id="GO:0004111">
    <property type="term" value="F:creatine kinase activity"/>
    <property type="evidence" value="ECO:0007669"/>
    <property type="project" value="InterPro"/>
</dbReference>
<dbReference type="GO" id="GO:0004672">
    <property type="term" value="F:protein kinase activity"/>
    <property type="evidence" value="ECO:0007669"/>
    <property type="project" value="UniProtKB-UniRule"/>
</dbReference>
<dbReference type="GO" id="GO:0046314">
    <property type="term" value="P:phosphocreatine biosynthetic process"/>
    <property type="evidence" value="ECO:0007669"/>
    <property type="project" value="InterPro"/>
</dbReference>
<dbReference type="CDD" id="cd07930">
    <property type="entry name" value="bacterial_phosphagen_kinase"/>
    <property type="match status" value="1"/>
</dbReference>
<dbReference type="FunFam" id="3.30.590.10:FF:000007">
    <property type="entry name" value="Protein-arginine kinase"/>
    <property type="match status" value="1"/>
</dbReference>
<dbReference type="Gene3D" id="3.30.590.10">
    <property type="entry name" value="Glutamine synthetase/guanido kinase, catalytic domain"/>
    <property type="match status" value="1"/>
</dbReference>
<dbReference type="HAMAP" id="MF_00602">
    <property type="entry name" value="Prot_Arg_kinase"/>
    <property type="match status" value="1"/>
</dbReference>
<dbReference type="InterPro" id="IPR023660">
    <property type="entry name" value="Arg_Kinase"/>
</dbReference>
<dbReference type="InterPro" id="IPR000749">
    <property type="entry name" value="ATP-guanido_PTrfase"/>
</dbReference>
<dbReference type="InterPro" id="IPR022415">
    <property type="entry name" value="ATP-guanido_PTrfase_AS"/>
</dbReference>
<dbReference type="InterPro" id="IPR022414">
    <property type="entry name" value="ATP-guanido_PTrfase_cat"/>
</dbReference>
<dbReference type="InterPro" id="IPR014746">
    <property type="entry name" value="Gln_synth/guanido_kin_cat_dom"/>
</dbReference>
<dbReference type="NCBIfam" id="NF002194">
    <property type="entry name" value="PRK01059.1-4"/>
    <property type="match status" value="1"/>
</dbReference>
<dbReference type="PANTHER" id="PTHR11547:SF38">
    <property type="entry name" value="ARGININE KINASE 1-RELATED"/>
    <property type="match status" value="1"/>
</dbReference>
<dbReference type="PANTHER" id="PTHR11547">
    <property type="entry name" value="ARGININE OR CREATINE KINASE"/>
    <property type="match status" value="1"/>
</dbReference>
<dbReference type="Pfam" id="PF00217">
    <property type="entry name" value="ATP-gua_Ptrans"/>
    <property type="match status" value="1"/>
</dbReference>
<dbReference type="SUPFAM" id="SSF55931">
    <property type="entry name" value="Glutamine synthetase/guanido kinase"/>
    <property type="match status" value="1"/>
</dbReference>
<dbReference type="PROSITE" id="PS00112">
    <property type="entry name" value="PHOSPHAGEN_KINASE"/>
    <property type="match status" value="1"/>
</dbReference>
<dbReference type="PROSITE" id="PS51510">
    <property type="entry name" value="PHOSPHAGEN_KINASE_C"/>
    <property type="match status" value="1"/>
</dbReference>